<proteinExistence type="evidence at transcript level"/>
<evidence type="ECO:0000255" key="1"/>
<evidence type="ECO:0000269" key="2">
    <source>
    </source>
</evidence>
<evidence type="ECO:0000305" key="3"/>
<organism>
    <name type="scientific">Arabidopsis thaliana</name>
    <name type="common">Mouse-ear cress</name>
    <dbReference type="NCBI Taxonomy" id="3702"/>
    <lineage>
        <taxon>Eukaryota</taxon>
        <taxon>Viridiplantae</taxon>
        <taxon>Streptophyta</taxon>
        <taxon>Embryophyta</taxon>
        <taxon>Tracheophyta</taxon>
        <taxon>Spermatophyta</taxon>
        <taxon>Magnoliopsida</taxon>
        <taxon>eudicotyledons</taxon>
        <taxon>Gunneridae</taxon>
        <taxon>Pentapetalae</taxon>
        <taxon>rosids</taxon>
        <taxon>malvids</taxon>
        <taxon>Brassicales</taxon>
        <taxon>Brassicaceae</taxon>
        <taxon>Camelineae</taxon>
        <taxon>Arabidopsis</taxon>
    </lineage>
</organism>
<reference key="1">
    <citation type="journal article" date="2003" name="Plant Physiol.">
        <title>Microspore separation in the quartet 3 mutants of Arabidopsis is impaired by a defect in a developmentally regulated polygalacturonase required for pollen mother cell wall degradation.</title>
        <authorList>
            <person name="Rhee S.Y."/>
            <person name="Osborne E."/>
            <person name="Poindexter P.D."/>
            <person name="Somerville C.R."/>
        </authorList>
    </citation>
    <scope>NUCLEOTIDE SEQUENCE [GENOMIC DNA / MRNA]</scope>
    <scope>FUNCTION</scope>
    <scope>TISSUE SPECIFICITY</scope>
    <scope>DEVELOPMENTAL STAGE</scope>
    <scope>SUBCELLULAR LOCATION</scope>
    <scope>DISRUPTION PHENOTYPE</scope>
    <source>
        <strain>cv. Columbia</strain>
        <strain>cv. Landsberg erecta</strain>
    </source>
</reference>
<reference key="2">
    <citation type="journal article" date="1999" name="Nature">
        <title>Sequence and analysis of chromosome 4 of the plant Arabidopsis thaliana.</title>
        <authorList>
            <person name="Mayer K.F.X."/>
            <person name="Schueller C."/>
            <person name="Wambutt R."/>
            <person name="Murphy G."/>
            <person name="Volckaert G."/>
            <person name="Pohl T."/>
            <person name="Duesterhoeft A."/>
            <person name="Stiekema W."/>
            <person name="Entian K.-D."/>
            <person name="Terryn N."/>
            <person name="Harris B."/>
            <person name="Ansorge W."/>
            <person name="Brandt P."/>
            <person name="Grivell L.A."/>
            <person name="Rieger M."/>
            <person name="Weichselgartner M."/>
            <person name="de Simone V."/>
            <person name="Obermaier B."/>
            <person name="Mache R."/>
            <person name="Mueller M."/>
            <person name="Kreis M."/>
            <person name="Delseny M."/>
            <person name="Puigdomenech P."/>
            <person name="Watson M."/>
            <person name="Schmidtheini T."/>
            <person name="Reichert B."/>
            <person name="Portetelle D."/>
            <person name="Perez-Alonso M."/>
            <person name="Boutry M."/>
            <person name="Bancroft I."/>
            <person name="Vos P."/>
            <person name="Hoheisel J."/>
            <person name="Zimmermann W."/>
            <person name="Wedler H."/>
            <person name="Ridley P."/>
            <person name="Langham S.-A."/>
            <person name="McCullagh B."/>
            <person name="Bilham L."/>
            <person name="Robben J."/>
            <person name="van der Schueren J."/>
            <person name="Grymonprez B."/>
            <person name="Chuang Y.-J."/>
            <person name="Vandenbussche F."/>
            <person name="Braeken M."/>
            <person name="Weltjens I."/>
            <person name="Voet M."/>
            <person name="Bastiaens I."/>
            <person name="Aert R."/>
            <person name="Defoor E."/>
            <person name="Weitzenegger T."/>
            <person name="Bothe G."/>
            <person name="Ramsperger U."/>
            <person name="Hilbert H."/>
            <person name="Braun M."/>
            <person name="Holzer E."/>
            <person name="Brandt A."/>
            <person name="Peters S."/>
            <person name="van Staveren M."/>
            <person name="Dirkse W."/>
            <person name="Mooijman P."/>
            <person name="Klein Lankhorst R."/>
            <person name="Rose M."/>
            <person name="Hauf J."/>
            <person name="Koetter P."/>
            <person name="Berneiser S."/>
            <person name="Hempel S."/>
            <person name="Feldpausch M."/>
            <person name="Lamberth S."/>
            <person name="Van den Daele H."/>
            <person name="De Keyser A."/>
            <person name="Buysshaert C."/>
            <person name="Gielen J."/>
            <person name="Villarroel R."/>
            <person name="De Clercq R."/>
            <person name="van Montagu M."/>
            <person name="Rogers J."/>
            <person name="Cronin A."/>
            <person name="Quail M.A."/>
            <person name="Bray-Allen S."/>
            <person name="Clark L."/>
            <person name="Doggett J."/>
            <person name="Hall S."/>
            <person name="Kay M."/>
            <person name="Lennard N."/>
            <person name="McLay K."/>
            <person name="Mayes R."/>
            <person name="Pettett A."/>
            <person name="Rajandream M.A."/>
            <person name="Lyne M."/>
            <person name="Benes V."/>
            <person name="Rechmann S."/>
            <person name="Borkova D."/>
            <person name="Bloecker H."/>
            <person name="Scharfe M."/>
            <person name="Grimm M."/>
            <person name="Loehnert T.-H."/>
            <person name="Dose S."/>
            <person name="de Haan M."/>
            <person name="Maarse A.C."/>
            <person name="Schaefer M."/>
            <person name="Mueller-Auer S."/>
            <person name="Gabel C."/>
            <person name="Fuchs M."/>
            <person name="Fartmann B."/>
            <person name="Granderath K."/>
            <person name="Dauner D."/>
            <person name="Herzl A."/>
            <person name="Neumann S."/>
            <person name="Argiriou A."/>
            <person name="Vitale D."/>
            <person name="Liguori R."/>
            <person name="Piravandi E."/>
            <person name="Massenet O."/>
            <person name="Quigley F."/>
            <person name="Clabauld G."/>
            <person name="Muendlein A."/>
            <person name="Felber R."/>
            <person name="Schnabl S."/>
            <person name="Hiller R."/>
            <person name="Schmidt W."/>
            <person name="Lecharny A."/>
            <person name="Aubourg S."/>
            <person name="Chefdor F."/>
            <person name="Cooke R."/>
            <person name="Berger C."/>
            <person name="Monfort A."/>
            <person name="Casacuberta E."/>
            <person name="Gibbons T."/>
            <person name="Weber N."/>
            <person name="Vandenbol M."/>
            <person name="Bargues M."/>
            <person name="Terol J."/>
            <person name="Torres A."/>
            <person name="Perez-Perez A."/>
            <person name="Purnelle B."/>
            <person name="Bent E."/>
            <person name="Johnson S."/>
            <person name="Tacon D."/>
            <person name="Jesse T."/>
            <person name="Heijnen L."/>
            <person name="Schwarz S."/>
            <person name="Scholler P."/>
            <person name="Heber S."/>
            <person name="Francs P."/>
            <person name="Bielke C."/>
            <person name="Frishman D."/>
            <person name="Haase D."/>
            <person name="Lemcke K."/>
            <person name="Mewes H.-W."/>
            <person name="Stocker S."/>
            <person name="Zaccaria P."/>
            <person name="Bevan M."/>
            <person name="Wilson R.K."/>
            <person name="de la Bastide M."/>
            <person name="Habermann K."/>
            <person name="Parnell L."/>
            <person name="Dedhia N."/>
            <person name="Gnoj L."/>
            <person name="Schutz K."/>
            <person name="Huang E."/>
            <person name="Spiegel L."/>
            <person name="Sekhon M."/>
            <person name="Murray J."/>
            <person name="Sheet P."/>
            <person name="Cordes M."/>
            <person name="Abu-Threideh J."/>
            <person name="Stoneking T."/>
            <person name="Kalicki J."/>
            <person name="Graves T."/>
            <person name="Harmon G."/>
            <person name="Edwards J."/>
            <person name="Latreille P."/>
            <person name="Courtney L."/>
            <person name="Cloud J."/>
            <person name="Abbott A."/>
            <person name="Scott K."/>
            <person name="Johnson D."/>
            <person name="Minx P."/>
            <person name="Bentley D."/>
            <person name="Fulton B."/>
            <person name="Miller N."/>
            <person name="Greco T."/>
            <person name="Kemp K."/>
            <person name="Kramer J."/>
            <person name="Fulton L."/>
            <person name="Mardis E."/>
            <person name="Dante M."/>
            <person name="Pepin K."/>
            <person name="Hillier L.W."/>
            <person name="Nelson J."/>
            <person name="Spieth J."/>
            <person name="Ryan E."/>
            <person name="Andrews S."/>
            <person name="Geisel C."/>
            <person name="Layman D."/>
            <person name="Du H."/>
            <person name="Ali J."/>
            <person name="Berghoff A."/>
            <person name="Jones K."/>
            <person name="Drone K."/>
            <person name="Cotton M."/>
            <person name="Joshu C."/>
            <person name="Antonoiu B."/>
            <person name="Zidanic M."/>
            <person name="Strong C."/>
            <person name="Sun H."/>
            <person name="Lamar B."/>
            <person name="Yordan C."/>
            <person name="Ma P."/>
            <person name="Zhong J."/>
            <person name="Preston R."/>
            <person name="Vil D."/>
            <person name="Shekher M."/>
            <person name="Matero A."/>
            <person name="Shah R."/>
            <person name="Swaby I.K."/>
            <person name="O'Shaughnessy A."/>
            <person name="Rodriguez M."/>
            <person name="Hoffman J."/>
            <person name="Till S."/>
            <person name="Granat S."/>
            <person name="Shohdy N."/>
            <person name="Hasegawa A."/>
            <person name="Hameed A."/>
            <person name="Lodhi M."/>
            <person name="Johnson A."/>
            <person name="Chen E."/>
            <person name="Marra M.A."/>
            <person name="Martienssen R."/>
            <person name="McCombie W.R."/>
        </authorList>
    </citation>
    <scope>NUCLEOTIDE SEQUENCE [LARGE SCALE GENOMIC DNA]</scope>
    <source>
        <strain>cv. Columbia</strain>
    </source>
</reference>
<reference key="3">
    <citation type="journal article" date="2017" name="Plant J.">
        <title>Araport11: a complete reannotation of the Arabidopsis thaliana reference genome.</title>
        <authorList>
            <person name="Cheng C.Y."/>
            <person name="Krishnakumar V."/>
            <person name="Chan A.P."/>
            <person name="Thibaud-Nissen F."/>
            <person name="Schobel S."/>
            <person name="Town C.D."/>
        </authorList>
    </citation>
    <scope>GENOME REANNOTATION</scope>
    <source>
        <strain>cv. Columbia</strain>
    </source>
</reference>
<feature type="signal peptide" evidence="1">
    <location>
        <begin position="1"/>
        <end position="27"/>
    </location>
</feature>
<feature type="chain" id="PRO_0000370639" description="Polygalacturonase QRT3">
    <location>
        <begin position="28"/>
        <end position="481"/>
    </location>
</feature>
<feature type="repeat" description="PbH1 1">
    <location>
        <begin position="203"/>
        <end position="226"/>
    </location>
</feature>
<feature type="repeat" description="PbH1 2">
    <location>
        <begin position="261"/>
        <end position="282"/>
    </location>
</feature>
<feature type="repeat" description="PbH1 3">
    <location>
        <begin position="356"/>
        <end position="377"/>
    </location>
</feature>
<feature type="glycosylation site" description="N-linked (GlcNAc...) asparagine" evidence="1">
    <location>
        <position position="415"/>
    </location>
</feature>
<feature type="glycosylation site" description="N-linked (GlcNAc...) asparagine" evidence="1">
    <location>
        <position position="455"/>
    </location>
</feature>
<keyword id="KW-0134">Cell wall</keyword>
<keyword id="KW-0961">Cell wall biogenesis/degradation</keyword>
<keyword id="KW-0325">Glycoprotein</keyword>
<keyword id="KW-0326">Glycosidase</keyword>
<keyword id="KW-0378">Hydrolase</keyword>
<keyword id="KW-1185">Reference proteome</keyword>
<keyword id="KW-0677">Repeat</keyword>
<keyword id="KW-0964">Secreted</keyword>
<keyword id="KW-0732">Signal</keyword>
<dbReference type="EC" id="3.2.1.15"/>
<dbReference type="EMBL" id="AY268942">
    <property type="protein sequence ID" value="AAQ83300.1"/>
    <property type="molecule type" value="mRNA"/>
</dbReference>
<dbReference type="EMBL" id="AY268941">
    <property type="protein sequence ID" value="AAQ83299.1"/>
    <property type="molecule type" value="Genomic_DNA"/>
</dbReference>
<dbReference type="EMBL" id="AL021637">
    <property type="protein sequence ID" value="CAA16613.1"/>
    <property type="molecule type" value="Genomic_DNA"/>
</dbReference>
<dbReference type="EMBL" id="AL161552">
    <property type="protein sequence ID" value="CAB79005.1"/>
    <property type="molecule type" value="Genomic_DNA"/>
</dbReference>
<dbReference type="EMBL" id="CP002687">
    <property type="protein sequence ID" value="AEE84266.1"/>
    <property type="molecule type" value="Genomic_DNA"/>
</dbReference>
<dbReference type="EMBL" id="CP002687">
    <property type="protein sequence ID" value="AEE84267.1"/>
    <property type="molecule type" value="Genomic_DNA"/>
</dbReference>
<dbReference type="EMBL" id="CP002687">
    <property type="protein sequence ID" value="ANM67839.1"/>
    <property type="molecule type" value="Genomic_DNA"/>
</dbReference>
<dbReference type="EMBL" id="CP002687">
    <property type="protein sequence ID" value="ANM67840.1"/>
    <property type="molecule type" value="Genomic_DNA"/>
</dbReference>
<dbReference type="PIR" id="T04889">
    <property type="entry name" value="T04889"/>
</dbReference>
<dbReference type="RefSeq" id="NP_001078410.1">
    <property type="nucleotide sequence ID" value="NM_001084941.2"/>
</dbReference>
<dbReference type="RefSeq" id="NP_001329640.1">
    <property type="nucleotide sequence ID" value="NM_001341396.1"/>
</dbReference>
<dbReference type="RefSeq" id="NP_001329641.1">
    <property type="nucleotide sequence ID" value="NM_001341397.1"/>
</dbReference>
<dbReference type="RefSeq" id="NP_193738.1">
    <property type="nucleotide sequence ID" value="NM_118124.3"/>
</dbReference>
<dbReference type="SMR" id="O49432"/>
<dbReference type="FunCoup" id="O49432">
    <property type="interactions" value="159"/>
</dbReference>
<dbReference type="STRING" id="3702.O49432"/>
<dbReference type="GlyCosmos" id="O49432">
    <property type="glycosylation" value="2 sites, No reported glycans"/>
</dbReference>
<dbReference type="GlyGen" id="O49432">
    <property type="glycosylation" value="3 sites"/>
</dbReference>
<dbReference type="PaxDb" id="3702-AT4G20050.1"/>
<dbReference type="ProteomicsDB" id="226091"/>
<dbReference type="EnsemblPlants" id="AT4G20050.1">
    <property type="protein sequence ID" value="AT4G20050.1"/>
    <property type="gene ID" value="AT4G20050"/>
</dbReference>
<dbReference type="EnsemblPlants" id="AT4G20050.2">
    <property type="protein sequence ID" value="AT4G20050.2"/>
    <property type="gene ID" value="AT4G20050"/>
</dbReference>
<dbReference type="EnsemblPlants" id="AT4G20050.6">
    <property type="protein sequence ID" value="AT4G20050.6"/>
    <property type="gene ID" value="AT4G20050"/>
</dbReference>
<dbReference type="EnsemblPlants" id="AT4G20050.7">
    <property type="protein sequence ID" value="AT4G20050.7"/>
    <property type="gene ID" value="AT4G20050"/>
</dbReference>
<dbReference type="GeneID" id="827750"/>
<dbReference type="Gramene" id="AT4G20050.1">
    <property type="protein sequence ID" value="AT4G20050.1"/>
    <property type="gene ID" value="AT4G20050"/>
</dbReference>
<dbReference type="Gramene" id="AT4G20050.2">
    <property type="protein sequence ID" value="AT4G20050.2"/>
    <property type="gene ID" value="AT4G20050"/>
</dbReference>
<dbReference type="Gramene" id="AT4G20050.6">
    <property type="protein sequence ID" value="AT4G20050.6"/>
    <property type="gene ID" value="AT4G20050"/>
</dbReference>
<dbReference type="Gramene" id="AT4G20050.7">
    <property type="protein sequence ID" value="AT4G20050.7"/>
    <property type="gene ID" value="AT4G20050"/>
</dbReference>
<dbReference type="KEGG" id="ath:AT4G20050"/>
<dbReference type="Araport" id="AT4G20050"/>
<dbReference type="TAIR" id="AT4G20050">
    <property type="gene designation" value="QRT3"/>
</dbReference>
<dbReference type="eggNOG" id="ENOG502QV3U">
    <property type="taxonomic scope" value="Eukaryota"/>
</dbReference>
<dbReference type="HOGENOM" id="CLU_031155_0_0_1"/>
<dbReference type="InParanoid" id="O49432"/>
<dbReference type="PhylomeDB" id="O49432"/>
<dbReference type="BioCyc" id="ARA:AT4G20050-MONOMER"/>
<dbReference type="PRO" id="PR:O49432"/>
<dbReference type="Proteomes" id="UP000006548">
    <property type="component" value="Chromosome 4"/>
</dbReference>
<dbReference type="ExpressionAtlas" id="O49432">
    <property type="expression patterns" value="baseline and differential"/>
</dbReference>
<dbReference type="GO" id="GO:0005576">
    <property type="term" value="C:extracellular region"/>
    <property type="evidence" value="ECO:0007669"/>
    <property type="project" value="UniProtKB-KW"/>
</dbReference>
<dbReference type="GO" id="GO:0004650">
    <property type="term" value="F:polygalacturonase activity"/>
    <property type="evidence" value="ECO:0000314"/>
    <property type="project" value="TAIR"/>
</dbReference>
<dbReference type="GO" id="GO:0071555">
    <property type="term" value="P:cell wall organization"/>
    <property type="evidence" value="ECO:0007669"/>
    <property type="project" value="UniProtKB-KW"/>
</dbReference>
<dbReference type="GO" id="GO:0009556">
    <property type="term" value="P:microsporogenesis"/>
    <property type="evidence" value="ECO:0000315"/>
    <property type="project" value="TAIR"/>
</dbReference>
<dbReference type="GO" id="GO:0010584">
    <property type="term" value="P:pollen exine formation"/>
    <property type="evidence" value="ECO:0000315"/>
    <property type="project" value="TAIR"/>
</dbReference>
<dbReference type="FunFam" id="2.160.20.10:FF:000046">
    <property type="entry name" value="Polygalacturonase QRT3"/>
    <property type="match status" value="1"/>
</dbReference>
<dbReference type="Gene3D" id="2.160.20.10">
    <property type="entry name" value="Single-stranded right-handed beta-helix, Pectin lyase-like"/>
    <property type="match status" value="1"/>
</dbReference>
<dbReference type="InterPro" id="IPR012334">
    <property type="entry name" value="Pectin_lyas_fold"/>
</dbReference>
<dbReference type="InterPro" id="IPR011050">
    <property type="entry name" value="Pectin_lyase_fold/virulence"/>
</dbReference>
<dbReference type="InterPro" id="IPR039279">
    <property type="entry name" value="QRT3-like"/>
</dbReference>
<dbReference type="PANTHER" id="PTHR33928">
    <property type="entry name" value="POLYGALACTURONASE QRT3"/>
    <property type="match status" value="1"/>
</dbReference>
<dbReference type="PANTHER" id="PTHR33928:SF7">
    <property type="entry name" value="POLYGALACTURONASE QRT3"/>
    <property type="match status" value="1"/>
</dbReference>
<dbReference type="SUPFAM" id="SSF51126">
    <property type="entry name" value="Pectin lyase-like"/>
    <property type="match status" value="1"/>
</dbReference>
<gene>
    <name type="primary">QRT3</name>
    <name type="ordered locus">At4g20050</name>
    <name type="ORF">F18F4.150</name>
</gene>
<name>QRT3_ARATH</name>
<protein>
    <recommendedName>
        <fullName>Polygalacturonase QRT3</fullName>
        <shortName>AtQRT3</shortName>
        <shortName>PG QRT3</shortName>
        <ecNumber>3.2.1.15</ecNumber>
    </recommendedName>
    <alternativeName>
        <fullName>Pectinase QRT3</fullName>
    </alternativeName>
    <alternativeName>
        <fullName>Protein QUARTET 3</fullName>
    </alternativeName>
</protein>
<accession>O49432</accession>
<comment type="function">
    <text evidence="2">Polygalacturonase required for degrading the pollen mother cell wall during microspore development.</text>
</comment>
<comment type="catalytic activity">
    <reaction>
        <text>(1,4-alpha-D-galacturonosyl)n+m + H2O = (1,4-alpha-D-galacturonosyl)n + (1,4-alpha-D-galacturonosyl)m.</text>
        <dbReference type="EC" id="3.2.1.15"/>
    </reaction>
</comment>
<comment type="subcellular location">
    <subcellularLocation>
        <location evidence="2">Secreted</location>
        <location evidence="2">Cell wall</location>
    </subcellularLocation>
</comment>
<comment type="tissue specificity">
    <text evidence="2">Expressed in the tapetum cells in the anthers and in the ovules of open flowers.</text>
</comment>
<comment type="developmental stage">
    <text evidence="2">Transiently expressed during the early microspore stage.</text>
</comment>
<comment type="disruption phenotype">
    <text evidence="2">The mature pollen grains are arranged in a tetrad. A layer of material is frequently deposited on the surface of the distal region of the pollen grains.</text>
</comment>
<comment type="similarity">
    <text evidence="3">Belongs to the glycosyl hydrolase 28 family.</text>
</comment>
<sequence>MELRKSQVAMPVFLAIMSLMVSQVVFAEKDSGSMSPHDRALAEMQALKASLVRRNLPALVSPPPTPPQAVPGPRVYQVISYGADPTGKLDSTDAILKAMEEAFDGPNHGVLMQGINDLGGARIDLQGGSYLISRPLRFPSAGAGNLLISGGTLRASNDFPVDRYLIELKDESSKLQYIFEYITLRDLLIDCNYRGGAIAVINSLRTSIDNCYITRFGDTNGILVKSGHETYIRNSFLGQHITAGGDRGERSFSGTAINLMGNDNAVTDTVIFSARIGVMVSGQANLLSGVHCYNKATGFGGTGIYLRLPGLTQNRIVNSYLDYTGIVAEDPVQLQISGTFFLGDAFILLKSIAGYIRGVSIVDNMFSGSGHGVQIVQLDQRNTAFDDVGQVVVDRNSVNGMVEKSTVARGSVDGNGTSWTVDFNPVLLFPDLINHVQYTLVASEAGVFPLHALRNVSDNRVVVETNAPVTGTVYVTVNQGV</sequence>